<proteinExistence type="inferred from homology"/>
<dbReference type="EC" id="1.1.1.25" evidence="1"/>
<dbReference type="EMBL" id="AJ965256">
    <property type="protein sequence ID" value="CAI82630.1"/>
    <property type="molecule type" value="Genomic_DNA"/>
</dbReference>
<dbReference type="RefSeq" id="WP_011308987.1">
    <property type="nucleotide sequence ID" value="NC_007356.1"/>
</dbReference>
<dbReference type="SMR" id="Q3ZZN3"/>
<dbReference type="KEGG" id="deh:cbdbA429"/>
<dbReference type="HOGENOM" id="CLU_044063_4_1_0"/>
<dbReference type="UniPathway" id="UPA00053">
    <property type="reaction ID" value="UER00087"/>
</dbReference>
<dbReference type="Proteomes" id="UP000000433">
    <property type="component" value="Chromosome"/>
</dbReference>
<dbReference type="GO" id="GO:0050661">
    <property type="term" value="F:NADP binding"/>
    <property type="evidence" value="ECO:0007669"/>
    <property type="project" value="InterPro"/>
</dbReference>
<dbReference type="GO" id="GO:0004764">
    <property type="term" value="F:shikimate 3-dehydrogenase (NADP+) activity"/>
    <property type="evidence" value="ECO:0007669"/>
    <property type="project" value="UniProtKB-UniRule"/>
</dbReference>
<dbReference type="GO" id="GO:0008652">
    <property type="term" value="P:amino acid biosynthetic process"/>
    <property type="evidence" value="ECO:0007669"/>
    <property type="project" value="UniProtKB-KW"/>
</dbReference>
<dbReference type="GO" id="GO:0009073">
    <property type="term" value="P:aromatic amino acid family biosynthetic process"/>
    <property type="evidence" value="ECO:0007669"/>
    <property type="project" value="UniProtKB-KW"/>
</dbReference>
<dbReference type="GO" id="GO:0009423">
    <property type="term" value="P:chorismate biosynthetic process"/>
    <property type="evidence" value="ECO:0007669"/>
    <property type="project" value="UniProtKB-UniRule"/>
</dbReference>
<dbReference type="GO" id="GO:0019632">
    <property type="term" value="P:shikimate metabolic process"/>
    <property type="evidence" value="ECO:0007669"/>
    <property type="project" value="InterPro"/>
</dbReference>
<dbReference type="CDD" id="cd01065">
    <property type="entry name" value="NAD_bind_Shikimate_DH"/>
    <property type="match status" value="1"/>
</dbReference>
<dbReference type="Gene3D" id="3.40.50.10860">
    <property type="entry name" value="Leucine Dehydrogenase, chain A, domain 1"/>
    <property type="match status" value="1"/>
</dbReference>
<dbReference type="Gene3D" id="3.40.50.720">
    <property type="entry name" value="NAD(P)-binding Rossmann-like Domain"/>
    <property type="match status" value="1"/>
</dbReference>
<dbReference type="HAMAP" id="MF_00222">
    <property type="entry name" value="Shikimate_DH_AroE"/>
    <property type="match status" value="1"/>
</dbReference>
<dbReference type="InterPro" id="IPR046346">
    <property type="entry name" value="Aminoacid_DH-like_N_sf"/>
</dbReference>
<dbReference type="InterPro" id="IPR036291">
    <property type="entry name" value="NAD(P)-bd_dom_sf"/>
</dbReference>
<dbReference type="InterPro" id="IPR041121">
    <property type="entry name" value="SDH_C"/>
</dbReference>
<dbReference type="InterPro" id="IPR011342">
    <property type="entry name" value="Shikimate_DH"/>
</dbReference>
<dbReference type="InterPro" id="IPR013708">
    <property type="entry name" value="Shikimate_DH-bd_N"/>
</dbReference>
<dbReference type="InterPro" id="IPR022893">
    <property type="entry name" value="Shikimate_DH_fam"/>
</dbReference>
<dbReference type="NCBIfam" id="TIGR00507">
    <property type="entry name" value="aroE"/>
    <property type="match status" value="1"/>
</dbReference>
<dbReference type="NCBIfam" id="NF001319">
    <property type="entry name" value="PRK00258.3-3"/>
    <property type="match status" value="1"/>
</dbReference>
<dbReference type="NCBIfam" id="NF001322">
    <property type="entry name" value="PRK00258.3-6"/>
    <property type="match status" value="1"/>
</dbReference>
<dbReference type="PANTHER" id="PTHR21089:SF1">
    <property type="entry name" value="BIFUNCTIONAL 3-DEHYDROQUINATE DEHYDRATASE_SHIKIMATE DEHYDROGENASE, CHLOROPLASTIC"/>
    <property type="match status" value="1"/>
</dbReference>
<dbReference type="PANTHER" id="PTHR21089">
    <property type="entry name" value="SHIKIMATE DEHYDROGENASE"/>
    <property type="match status" value="1"/>
</dbReference>
<dbReference type="Pfam" id="PF18317">
    <property type="entry name" value="SDH_C"/>
    <property type="match status" value="1"/>
</dbReference>
<dbReference type="Pfam" id="PF08501">
    <property type="entry name" value="Shikimate_dh_N"/>
    <property type="match status" value="1"/>
</dbReference>
<dbReference type="SUPFAM" id="SSF53223">
    <property type="entry name" value="Aminoacid dehydrogenase-like, N-terminal domain"/>
    <property type="match status" value="1"/>
</dbReference>
<dbReference type="SUPFAM" id="SSF51735">
    <property type="entry name" value="NAD(P)-binding Rossmann-fold domains"/>
    <property type="match status" value="1"/>
</dbReference>
<keyword id="KW-0028">Amino-acid biosynthesis</keyword>
<keyword id="KW-0057">Aromatic amino acid biosynthesis</keyword>
<keyword id="KW-0521">NADP</keyword>
<keyword id="KW-0560">Oxidoreductase</keyword>
<accession>Q3ZZN3</accession>
<feature type="chain" id="PRO_1000058661" description="Shikimate dehydrogenase (NADP(+))">
    <location>
        <begin position="1"/>
        <end position="286"/>
    </location>
</feature>
<feature type="active site" description="Proton acceptor" evidence="1">
    <location>
        <position position="70"/>
    </location>
</feature>
<feature type="binding site" evidence="1">
    <location>
        <begin position="19"/>
        <end position="21"/>
    </location>
    <ligand>
        <name>shikimate</name>
        <dbReference type="ChEBI" id="CHEBI:36208"/>
    </ligand>
</feature>
<feature type="binding site" evidence="1">
    <location>
        <position position="66"/>
    </location>
    <ligand>
        <name>shikimate</name>
        <dbReference type="ChEBI" id="CHEBI:36208"/>
    </ligand>
</feature>
<feature type="binding site" evidence="1">
    <location>
        <position position="91"/>
    </location>
    <ligand>
        <name>shikimate</name>
        <dbReference type="ChEBI" id="CHEBI:36208"/>
    </ligand>
</feature>
<feature type="binding site" evidence="1">
    <location>
        <position position="106"/>
    </location>
    <ligand>
        <name>shikimate</name>
        <dbReference type="ChEBI" id="CHEBI:36208"/>
    </ligand>
</feature>
<feature type="binding site" evidence="1">
    <location>
        <begin position="130"/>
        <end position="134"/>
    </location>
    <ligand>
        <name>NADP(+)</name>
        <dbReference type="ChEBI" id="CHEBI:58349"/>
    </ligand>
</feature>
<feature type="binding site" evidence="1">
    <location>
        <position position="225"/>
    </location>
    <ligand>
        <name>NADP(+)</name>
        <dbReference type="ChEBI" id="CHEBI:58349"/>
    </ligand>
</feature>
<feature type="binding site" evidence="1">
    <location>
        <position position="227"/>
    </location>
    <ligand>
        <name>shikimate</name>
        <dbReference type="ChEBI" id="CHEBI:36208"/>
    </ligand>
</feature>
<feature type="binding site" evidence="1">
    <location>
        <position position="248"/>
    </location>
    <ligand>
        <name>NADP(+)</name>
        <dbReference type="ChEBI" id="CHEBI:58349"/>
    </ligand>
</feature>
<comment type="function">
    <text evidence="1">Involved in the biosynthesis of the chorismate, which leads to the biosynthesis of aromatic amino acids. Catalyzes the reversible NADPH linked reduction of 3-dehydroshikimate (DHSA) to yield shikimate (SA).</text>
</comment>
<comment type="catalytic activity">
    <reaction evidence="1">
        <text>shikimate + NADP(+) = 3-dehydroshikimate + NADPH + H(+)</text>
        <dbReference type="Rhea" id="RHEA:17737"/>
        <dbReference type="ChEBI" id="CHEBI:15378"/>
        <dbReference type="ChEBI" id="CHEBI:16630"/>
        <dbReference type="ChEBI" id="CHEBI:36208"/>
        <dbReference type="ChEBI" id="CHEBI:57783"/>
        <dbReference type="ChEBI" id="CHEBI:58349"/>
        <dbReference type="EC" id="1.1.1.25"/>
    </reaction>
</comment>
<comment type="pathway">
    <text evidence="1">Metabolic intermediate biosynthesis; chorismate biosynthesis; chorismate from D-erythrose 4-phosphate and phosphoenolpyruvate: step 4/7.</text>
</comment>
<comment type="subunit">
    <text evidence="1">Homodimer.</text>
</comment>
<comment type="similarity">
    <text evidence="1">Belongs to the shikimate dehydrogenase family.</text>
</comment>
<sequence>MQTIPDALFGIIGYPVSHSVSPAMQNAAFKHCKLNYLYLTIAAKPEDLQNVIASMRPLNIRGLNVTIPHKIEVIKYIDTLDPAAKKIGAVNTIVNENGQLKGYNTDFGGFVRLLEHNRIAPAKHRFALLGAGGSAHAISLAICTLGGHLTVLARQEEKAKDLAAKMCLRFKGKAQGLELNEANLEETLAESDIIVNCTPIGMGNLAGQSLIPPRLLRPDLTVIDAIYNPCKTRLLEDAEKKGAKIINGLEMLVWQGAMSFEIWTSQKAPFRVMMKEAEMALDENEK</sequence>
<protein>
    <recommendedName>
        <fullName evidence="1">Shikimate dehydrogenase (NADP(+))</fullName>
        <shortName evidence="1">SDH</shortName>
        <ecNumber evidence="1">1.1.1.25</ecNumber>
    </recommendedName>
</protein>
<organism>
    <name type="scientific">Dehalococcoides mccartyi (strain CBDB1)</name>
    <dbReference type="NCBI Taxonomy" id="255470"/>
    <lineage>
        <taxon>Bacteria</taxon>
        <taxon>Bacillati</taxon>
        <taxon>Chloroflexota</taxon>
        <taxon>Dehalococcoidia</taxon>
        <taxon>Dehalococcoidales</taxon>
        <taxon>Dehalococcoidaceae</taxon>
        <taxon>Dehalococcoides</taxon>
    </lineage>
</organism>
<name>AROE_DEHMC</name>
<gene>
    <name evidence="1" type="primary">aroE</name>
    <name type="ordered locus">cbdbA429</name>
</gene>
<reference key="1">
    <citation type="journal article" date="2005" name="Nat. Biotechnol.">
        <title>Genome sequence of the chlorinated compound-respiring bacterium Dehalococcoides species strain CBDB1.</title>
        <authorList>
            <person name="Kube M."/>
            <person name="Beck A."/>
            <person name="Zinder S.H."/>
            <person name="Kuhl H."/>
            <person name="Reinhardt R."/>
            <person name="Adrian L."/>
        </authorList>
    </citation>
    <scope>NUCLEOTIDE SEQUENCE [LARGE SCALE GENOMIC DNA]</scope>
    <source>
        <strain>CBDB1</strain>
    </source>
</reference>
<evidence type="ECO:0000255" key="1">
    <source>
        <dbReference type="HAMAP-Rule" id="MF_00222"/>
    </source>
</evidence>